<dbReference type="EC" id="1.6.-.-"/>
<dbReference type="EMBL" id="AP008934">
    <property type="protein sequence ID" value="BAE19476.1"/>
    <property type="molecule type" value="Genomic_DNA"/>
</dbReference>
<dbReference type="RefSeq" id="WP_011303929.1">
    <property type="nucleotide sequence ID" value="NC_007350.1"/>
</dbReference>
<dbReference type="SMR" id="Q49UU0"/>
<dbReference type="GeneID" id="3616577"/>
<dbReference type="KEGG" id="ssp:SSP2331"/>
<dbReference type="PATRIC" id="fig|342451.11.peg.2320"/>
<dbReference type="eggNOG" id="COG0778">
    <property type="taxonomic scope" value="Bacteria"/>
</dbReference>
<dbReference type="HOGENOM" id="CLU_070764_0_0_9"/>
<dbReference type="OrthoDB" id="9775805at2"/>
<dbReference type="Proteomes" id="UP000006371">
    <property type="component" value="Chromosome"/>
</dbReference>
<dbReference type="GO" id="GO:0016491">
    <property type="term" value="F:oxidoreductase activity"/>
    <property type="evidence" value="ECO:0007669"/>
    <property type="project" value="UniProtKB-KW"/>
</dbReference>
<dbReference type="CDD" id="cd02146">
    <property type="entry name" value="NfsA-like"/>
    <property type="match status" value="1"/>
</dbReference>
<dbReference type="Gene3D" id="3.40.109.10">
    <property type="entry name" value="NADH Oxidase"/>
    <property type="match status" value="1"/>
</dbReference>
<dbReference type="InterPro" id="IPR016446">
    <property type="entry name" value="Flavin_OxRdtase_Frp"/>
</dbReference>
<dbReference type="InterPro" id="IPR029479">
    <property type="entry name" value="Nitroreductase"/>
</dbReference>
<dbReference type="InterPro" id="IPR000415">
    <property type="entry name" value="Nitroreductase-like"/>
</dbReference>
<dbReference type="NCBIfam" id="NF008033">
    <property type="entry name" value="PRK10765.1"/>
    <property type="match status" value="1"/>
</dbReference>
<dbReference type="PANTHER" id="PTHR43425:SF3">
    <property type="entry name" value="NADPH-DEPENDENT OXIDOREDUCTASE"/>
    <property type="match status" value="1"/>
</dbReference>
<dbReference type="PANTHER" id="PTHR43425">
    <property type="entry name" value="OXYGEN-INSENSITIVE NADPH NITROREDUCTASE"/>
    <property type="match status" value="1"/>
</dbReference>
<dbReference type="Pfam" id="PF00881">
    <property type="entry name" value="Nitroreductase"/>
    <property type="match status" value="1"/>
</dbReference>
<dbReference type="PIRSF" id="PIRSF005426">
    <property type="entry name" value="Frp"/>
    <property type="match status" value="1"/>
</dbReference>
<dbReference type="SUPFAM" id="SSF55469">
    <property type="entry name" value="FMN-dependent nitroreductase-like"/>
    <property type="match status" value="1"/>
</dbReference>
<organism>
    <name type="scientific">Staphylococcus saprophyticus subsp. saprophyticus (strain ATCC 15305 / DSM 20229 / NCIMB 8711 / NCTC 7292 / S-41)</name>
    <dbReference type="NCBI Taxonomy" id="342451"/>
    <lineage>
        <taxon>Bacteria</taxon>
        <taxon>Bacillati</taxon>
        <taxon>Bacillota</taxon>
        <taxon>Bacilli</taxon>
        <taxon>Bacillales</taxon>
        <taxon>Staphylococcaceae</taxon>
        <taxon>Staphylococcus</taxon>
    </lineage>
</organism>
<sequence length="251" mass="28612">MSEHVYNLLKNHHSVRKFKKEPISEAHIKQLVEAGQNASTSSYLQAYSIIGINDPEIKEELKEVSGQPYVVENGYLFVFVMDYYRHSIINEESKHDMQTSFESAEGLLVGTIDATLVAQNIAATAEDMGYGMVYLGSLRNDVERVREILELPKHTFPLFGMALGIPEDDENGSPKPRLPFEHVFHANKYDSDKDSQRETLKAYDQTVSDYYSSRTNGERTESWSNQVANFMSAKQRLDMLEQLNKSGFIKK</sequence>
<feature type="chain" id="PRO_0000239731" description="NADPH-dependent oxidoreductase">
    <location>
        <begin position="1"/>
        <end position="251"/>
    </location>
</feature>
<reference key="1">
    <citation type="journal article" date="2005" name="Proc. Natl. Acad. Sci. U.S.A.">
        <title>Whole genome sequence of Staphylococcus saprophyticus reveals the pathogenesis of uncomplicated urinary tract infection.</title>
        <authorList>
            <person name="Kuroda M."/>
            <person name="Yamashita A."/>
            <person name="Hirakawa H."/>
            <person name="Kumano M."/>
            <person name="Morikawa K."/>
            <person name="Higashide M."/>
            <person name="Maruyama A."/>
            <person name="Inose Y."/>
            <person name="Matoba K."/>
            <person name="Toh H."/>
            <person name="Kuhara S."/>
            <person name="Hattori M."/>
            <person name="Ohta T."/>
        </authorList>
    </citation>
    <scope>NUCLEOTIDE SEQUENCE [LARGE SCALE GENOMIC DNA]</scope>
    <source>
        <strain>ATCC 15305 / DSM 20229 / NCIMB 8711 / NCTC 7292 / S-41</strain>
    </source>
</reference>
<keyword id="KW-0285">Flavoprotein</keyword>
<keyword id="KW-0288">FMN</keyword>
<keyword id="KW-0521">NADP</keyword>
<keyword id="KW-0560">Oxidoreductase</keyword>
<keyword id="KW-1185">Reference proteome</keyword>
<accession>Q49UU0</accession>
<proteinExistence type="inferred from homology"/>
<name>NFRA_STAS1</name>
<evidence type="ECO:0000250" key="1"/>
<evidence type="ECO:0000305" key="2"/>
<protein>
    <recommendedName>
        <fullName>NADPH-dependent oxidoreductase</fullName>
        <ecNumber>1.6.-.-</ecNumber>
    </recommendedName>
</protein>
<gene>
    <name type="primary">nfrA</name>
    <name type="ordered locus">SSP2331</name>
</gene>
<comment type="function">
    <text evidence="1">Reduces FMN, organic nitro compounds and disulfide DTNB. Involved in maintenance of the cellular redox state and the disulfide stress response (By similarity).</text>
</comment>
<comment type="cofactor">
    <cofactor evidence="1">
        <name>FMN</name>
        <dbReference type="ChEBI" id="CHEBI:58210"/>
    </cofactor>
</comment>
<comment type="similarity">
    <text evidence="2">Belongs to the flavin oxidoreductase frp family.</text>
</comment>